<evidence type="ECO:0000255" key="1">
    <source>
        <dbReference type="HAMAP-Rule" id="MF_00461"/>
    </source>
</evidence>
<evidence type="ECO:0000256" key="2">
    <source>
        <dbReference type="SAM" id="MobiDB-lite"/>
    </source>
</evidence>
<accession>Q8FH95</accession>
<sequence>MLKLFSAFRKNKIWDFNGGIHPPEMKTQSNGTPLRQVPLAQRFVIPLKQHIGAEGELCVSVGDKVLRGQPLTRGRGKMLPVHAPTSGTVTAIAPHSTSHPSALAELSVIIDADGEDCWIPRDGWADYRSRSREELIERIHQFGVAGLGGAGFPTGVKLQGGGDKIETLIINAAECEPYITADDRLMQDCAAQVVEGIRILAHILQPREILIGIEDNKPQAISMLRAVLADSHDISLRVIPTKYPSGGAKQLTYILTGKQVPHGGRSSDIGVLMQNVGTAYAVKRAVIDGEPITERVVTLTGEAIARPGNVWARLGTPVRHLLNDAGFCPSADQMVIMGGPLMGFTLPWLDVPVVKITNCLLAPSANELGEPQEEQSCIRCSACADACPADLLPQQLYWFSKGQQHDKATTHNIADCIECGACAWVCPSNIPLVQYFRQEKAEIAAIRQEEKRAAEAKARFEARQARLEREKAARLERHKSAAVQPAAKDKDAIAAALARVKEKQAQATQPIVIKAGERPDNSAIIAAREARKAQARAKQAELQQTNDAATVADPRKTAVEAAIARAKARKLEQQQANAEPEEQIDPRKAAVEAAIARAKARKLEQQQANAEPEEQIDPRKAAVEAAIARAKARKLEQQQANAEPEEQIDPRKAAVEAAIARAKARKLEQQQQANAEPEEQVDPRKAAVEAAIARAKARKLEQQQQANAEPEEQVDPRKAAVAAAIARVQAKKAAQQKVVNED</sequence>
<proteinExistence type="inferred from homology"/>
<reference key="1">
    <citation type="journal article" date="2002" name="Proc. Natl. Acad. Sci. U.S.A.">
        <title>Extensive mosaic structure revealed by the complete genome sequence of uropathogenic Escherichia coli.</title>
        <authorList>
            <person name="Welch R.A."/>
            <person name="Burland V."/>
            <person name="Plunkett G. III"/>
            <person name="Redford P."/>
            <person name="Roesch P."/>
            <person name="Rasko D."/>
            <person name="Buckles E.L."/>
            <person name="Liou S.-R."/>
            <person name="Boutin A."/>
            <person name="Hackett J."/>
            <person name="Stroud D."/>
            <person name="Mayhew G.F."/>
            <person name="Rose D.J."/>
            <person name="Zhou S."/>
            <person name="Schwartz D.C."/>
            <person name="Perna N.T."/>
            <person name="Mobley H.L.T."/>
            <person name="Donnenberg M.S."/>
            <person name="Blattner F.R."/>
        </authorList>
    </citation>
    <scope>NUCLEOTIDE SEQUENCE [LARGE SCALE GENOMIC DNA]</scope>
    <source>
        <strain>CFT073 / ATCC 700928 / UPEC</strain>
    </source>
</reference>
<feature type="chain" id="PRO_1000013603" description="Ion-translocating oxidoreductase complex subunit C">
    <location>
        <begin position="1"/>
        <end position="742"/>
    </location>
</feature>
<feature type="domain" description="4Fe-4S ferredoxin-type 1" evidence="1">
    <location>
        <begin position="369"/>
        <end position="397"/>
    </location>
</feature>
<feature type="domain" description="4Fe-4S ferredoxin-type 2" evidence="1">
    <location>
        <begin position="407"/>
        <end position="436"/>
    </location>
</feature>
<feature type="region of interest" description="Disordered" evidence="2">
    <location>
        <begin position="602"/>
        <end position="719"/>
    </location>
</feature>
<feature type="binding site" evidence="1">
    <location>
        <position position="377"/>
    </location>
    <ligand>
        <name>[4Fe-4S] cluster</name>
        <dbReference type="ChEBI" id="CHEBI:49883"/>
        <label>1</label>
    </ligand>
</feature>
<feature type="binding site" evidence="1">
    <location>
        <position position="380"/>
    </location>
    <ligand>
        <name>[4Fe-4S] cluster</name>
        <dbReference type="ChEBI" id="CHEBI:49883"/>
        <label>1</label>
    </ligand>
</feature>
<feature type="binding site" evidence="1">
    <location>
        <position position="383"/>
    </location>
    <ligand>
        <name>[4Fe-4S] cluster</name>
        <dbReference type="ChEBI" id="CHEBI:49883"/>
        <label>1</label>
    </ligand>
</feature>
<feature type="binding site" evidence="1">
    <location>
        <position position="387"/>
    </location>
    <ligand>
        <name>[4Fe-4S] cluster</name>
        <dbReference type="ChEBI" id="CHEBI:49883"/>
        <label>2</label>
    </ligand>
</feature>
<feature type="binding site" evidence="1">
    <location>
        <position position="416"/>
    </location>
    <ligand>
        <name>[4Fe-4S] cluster</name>
        <dbReference type="ChEBI" id="CHEBI:49883"/>
        <label>2</label>
    </ligand>
</feature>
<feature type="binding site" evidence="1">
    <location>
        <position position="419"/>
    </location>
    <ligand>
        <name>[4Fe-4S] cluster</name>
        <dbReference type="ChEBI" id="CHEBI:49883"/>
        <label>2</label>
    </ligand>
</feature>
<feature type="binding site" evidence="1">
    <location>
        <position position="422"/>
    </location>
    <ligand>
        <name>[4Fe-4S] cluster</name>
        <dbReference type="ChEBI" id="CHEBI:49883"/>
        <label>2</label>
    </ligand>
</feature>
<feature type="binding site" evidence="1">
    <location>
        <position position="426"/>
    </location>
    <ligand>
        <name>[4Fe-4S] cluster</name>
        <dbReference type="ChEBI" id="CHEBI:49883"/>
        <label>1</label>
    </ligand>
</feature>
<comment type="function">
    <text evidence="1">Part of a membrane-bound complex that couples electron transfer with translocation of ions across the membrane. Required to maintain the reduced state of SoxR.</text>
</comment>
<comment type="cofactor">
    <cofactor evidence="1">
        <name>[4Fe-4S] cluster</name>
        <dbReference type="ChEBI" id="CHEBI:49883"/>
    </cofactor>
    <text evidence="1">Binds 2 [4Fe-4S] clusters per subunit.</text>
</comment>
<comment type="subunit">
    <text evidence="1">The complex is composed of six subunits: RsxA, RsxB, RsxC, RsxD, RsxE and RsxG.</text>
</comment>
<comment type="subcellular location">
    <subcellularLocation>
        <location evidence="1">Cell inner membrane</location>
        <topology evidence="1">Peripheral membrane protein</topology>
    </subcellularLocation>
</comment>
<comment type="similarity">
    <text evidence="1">Belongs to the 4Fe4S bacterial-type ferredoxin family. RnfC subfamily.</text>
</comment>
<keyword id="KW-0004">4Fe-4S</keyword>
<keyword id="KW-0997">Cell inner membrane</keyword>
<keyword id="KW-1003">Cell membrane</keyword>
<keyword id="KW-0249">Electron transport</keyword>
<keyword id="KW-0408">Iron</keyword>
<keyword id="KW-0411">Iron-sulfur</keyword>
<keyword id="KW-0472">Membrane</keyword>
<keyword id="KW-0479">Metal-binding</keyword>
<keyword id="KW-1185">Reference proteome</keyword>
<keyword id="KW-0677">Repeat</keyword>
<keyword id="KW-1278">Translocase</keyword>
<keyword id="KW-0813">Transport</keyword>
<gene>
    <name evidence="1" type="primary">rsxC</name>
    <name type="ordered locus">c2021</name>
</gene>
<protein>
    <recommendedName>
        <fullName evidence="1">Ion-translocating oxidoreductase complex subunit C</fullName>
        <ecNumber evidence="1">7.-.-.-</ecNumber>
    </recommendedName>
    <alternativeName>
        <fullName evidence="1">Rsx electron transport complex subunit C</fullName>
    </alternativeName>
</protein>
<name>RSXC_ECOL6</name>
<organism>
    <name type="scientific">Escherichia coli O6:H1 (strain CFT073 / ATCC 700928 / UPEC)</name>
    <dbReference type="NCBI Taxonomy" id="199310"/>
    <lineage>
        <taxon>Bacteria</taxon>
        <taxon>Pseudomonadati</taxon>
        <taxon>Pseudomonadota</taxon>
        <taxon>Gammaproteobacteria</taxon>
        <taxon>Enterobacterales</taxon>
        <taxon>Enterobacteriaceae</taxon>
        <taxon>Escherichia</taxon>
    </lineage>
</organism>
<dbReference type="EC" id="7.-.-.-" evidence="1"/>
<dbReference type="EMBL" id="AE014075">
    <property type="protein sequence ID" value="AAN80481.1"/>
    <property type="molecule type" value="Genomic_DNA"/>
</dbReference>
<dbReference type="RefSeq" id="WP_000915828.1">
    <property type="nucleotide sequence ID" value="NZ_CP051263.1"/>
</dbReference>
<dbReference type="SMR" id="Q8FH95"/>
<dbReference type="STRING" id="199310.c2021"/>
<dbReference type="KEGG" id="ecc:c2021"/>
<dbReference type="eggNOG" id="COG4656">
    <property type="taxonomic scope" value="Bacteria"/>
</dbReference>
<dbReference type="HOGENOM" id="CLU_010808_2_1_6"/>
<dbReference type="BioCyc" id="ECOL199310:C2021-MONOMER"/>
<dbReference type="Proteomes" id="UP000001410">
    <property type="component" value="Chromosome"/>
</dbReference>
<dbReference type="GO" id="GO:0005886">
    <property type="term" value="C:plasma membrane"/>
    <property type="evidence" value="ECO:0007669"/>
    <property type="project" value="UniProtKB-SubCell"/>
</dbReference>
<dbReference type="GO" id="GO:0051539">
    <property type="term" value="F:4 iron, 4 sulfur cluster binding"/>
    <property type="evidence" value="ECO:0007669"/>
    <property type="project" value="UniProtKB-KW"/>
</dbReference>
<dbReference type="GO" id="GO:0009055">
    <property type="term" value="F:electron transfer activity"/>
    <property type="evidence" value="ECO:0007669"/>
    <property type="project" value="InterPro"/>
</dbReference>
<dbReference type="GO" id="GO:0046872">
    <property type="term" value="F:metal ion binding"/>
    <property type="evidence" value="ECO:0007669"/>
    <property type="project" value="UniProtKB-KW"/>
</dbReference>
<dbReference type="GO" id="GO:0022900">
    <property type="term" value="P:electron transport chain"/>
    <property type="evidence" value="ECO:0007669"/>
    <property type="project" value="UniProtKB-UniRule"/>
</dbReference>
<dbReference type="Gene3D" id="3.30.70.20">
    <property type="match status" value="1"/>
</dbReference>
<dbReference type="Gene3D" id="3.40.50.11540">
    <property type="entry name" value="NADH-ubiquinone oxidoreductase 51kDa subunit"/>
    <property type="match status" value="1"/>
</dbReference>
<dbReference type="HAMAP" id="MF_00461">
    <property type="entry name" value="RsxC_RnfC"/>
    <property type="match status" value="1"/>
</dbReference>
<dbReference type="InterPro" id="IPR017896">
    <property type="entry name" value="4Fe4S_Fe-S-bd"/>
</dbReference>
<dbReference type="InterPro" id="IPR017900">
    <property type="entry name" value="4Fe4S_Fe_S_CS"/>
</dbReference>
<dbReference type="InterPro" id="IPR010208">
    <property type="entry name" value="Ion_transpt_RnfC/RsxC"/>
</dbReference>
<dbReference type="InterPro" id="IPR011538">
    <property type="entry name" value="Nuo51_FMN-bd"/>
</dbReference>
<dbReference type="InterPro" id="IPR037225">
    <property type="entry name" value="Nuo51_FMN-bd_sf"/>
</dbReference>
<dbReference type="InterPro" id="IPR026902">
    <property type="entry name" value="RnfC_N"/>
</dbReference>
<dbReference type="InterPro" id="IPR019554">
    <property type="entry name" value="Soluble_ligand-bd"/>
</dbReference>
<dbReference type="NCBIfam" id="NF003454">
    <property type="entry name" value="PRK05035.1"/>
    <property type="match status" value="1"/>
</dbReference>
<dbReference type="NCBIfam" id="TIGR01945">
    <property type="entry name" value="rnfC"/>
    <property type="match status" value="1"/>
</dbReference>
<dbReference type="PANTHER" id="PTHR43034">
    <property type="entry name" value="ION-TRANSLOCATING OXIDOREDUCTASE COMPLEX SUBUNIT C"/>
    <property type="match status" value="1"/>
</dbReference>
<dbReference type="PANTHER" id="PTHR43034:SF2">
    <property type="entry name" value="ION-TRANSLOCATING OXIDOREDUCTASE COMPLEX SUBUNIT C"/>
    <property type="match status" value="1"/>
</dbReference>
<dbReference type="Pfam" id="PF01512">
    <property type="entry name" value="Complex1_51K"/>
    <property type="match status" value="1"/>
</dbReference>
<dbReference type="Pfam" id="PF12838">
    <property type="entry name" value="Fer4_7"/>
    <property type="match status" value="1"/>
</dbReference>
<dbReference type="Pfam" id="PF13375">
    <property type="entry name" value="RnfC_N"/>
    <property type="match status" value="1"/>
</dbReference>
<dbReference type="Pfam" id="PF10531">
    <property type="entry name" value="SLBB"/>
    <property type="match status" value="1"/>
</dbReference>
<dbReference type="SUPFAM" id="SSF46548">
    <property type="entry name" value="alpha-helical ferredoxin"/>
    <property type="match status" value="1"/>
</dbReference>
<dbReference type="SUPFAM" id="SSF142019">
    <property type="entry name" value="Nqo1 FMN-binding domain-like"/>
    <property type="match status" value="1"/>
</dbReference>
<dbReference type="PROSITE" id="PS00198">
    <property type="entry name" value="4FE4S_FER_1"/>
    <property type="match status" value="2"/>
</dbReference>
<dbReference type="PROSITE" id="PS51379">
    <property type="entry name" value="4FE4S_FER_2"/>
    <property type="match status" value="2"/>
</dbReference>